<organism>
    <name type="scientific">Yersinia pseudotuberculosis serotype O:1b (strain IP 31758)</name>
    <dbReference type="NCBI Taxonomy" id="349747"/>
    <lineage>
        <taxon>Bacteria</taxon>
        <taxon>Pseudomonadati</taxon>
        <taxon>Pseudomonadota</taxon>
        <taxon>Gammaproteobacteria</taxon>
        <taxon>Enterobacterales</taxon>
        <taxon>Yersiniaceae</taxon>
        <taxon>Yersinia</taxon>
    </lineage>
</organism>
<dbReference type="EC" id="3.1.21.10" evidence="1"/>
<dbReference type="EMBL" id="CP000720">
    <property type="protein sequence ID" value="ABS48040.1"/>
    <property type="molecule type" value="Genomic_DNA"/>
</dbReference>
<dbReference type="RefSeq" id="WP_002211201.1">
    <property type="nucleotide sequence ID" value="NC_009708.1"/>
</dbReference>
<dbReference type="SMR" id="A7FIC7"/>
<dbReference type="GeneID" id="57976605"/>
<dbReference type="KEGG" id="ypi:YpsIP31758_2032"/>
<dbReference type="HOGENOM" id="CLU_091257_2_1_6"/>
<dbReference type="Proteomes" id="UP000002412">
    <property type="component" value="Chromosome"/>
</dbReference>
<dbReference type="GO" id="GO:0005737">
    <property type="term" value="C:cytoplasm"/>
    <property type="evidence" value="ECO:0007669"/>
    <property type="project" value="UniProtKB-SubCell"/>
</dbReference>
<dbReference type="GO" id="GO:0048476">
    <property type="term" value="C:Holliday junction resolvase complex"/>
    <property type="evidence" value="ECO:0007669"/>
    <property type="project" value="UniProtKB-UniRule"/>
</dbReference>
<dbReference type="GO" id="GO:0008821">
    <property type="term" value="F:crossover junction DNA endonuclease activity"/>
    <property type="evidence" value="ECO:0007669"/>
    <property type="project" value="UniProtKB-UniRule"/>
</dbReference>
<dbReference type="GO" id="GO:0003677">
    <property type="term" value="F:DNA binding"/>
    <property type="evidence" value="ECO:0007669"/>
    <property type="project" value="UniProtKB-KW"/>
</dbReference>
<dbReference type="GO" id="GO:0000287">
    <property type="term" value="F:magnesium ion binding"/>
    <property type="evidence" value="ECO:0007669"/>
    <property type="project" value="UniProtKB-UniRule"/>
</dbReference>
<dbReference type="GO" id="GO:0006310">
    <property type="term" value="P:DNA recombination"/>
    <property type="evidence" value="ECO:0007669"/>
    <property type="project" value="UniProtKB-UniRule"/>
</dbReference>
<dbReference type="GO" id="GO:0006281">
    <property type="term" value="P:DNA repair"/>
    <property type="evidence" value="ECO:0007669"/>
    <property type="project" value="UniProtKB-UniRule"/>
</dbReference>
<dbReference type="CDD" id="cd16962">
    <property type="entry name" value="RuvC"/>
    <property type="match status" value="1"/>
</dbReference>
<dbReference type="FunFam" id="3.30.420.10:FF:000002">
    <property type="entry name" value="Crossover junction endodeoxyribonuclease RuvC"/>
    <property type="match status" value="1"/>
</dbReference>
<dbReference type="Gene3D" id="3.30.420.10">
    <property type="entry name" value="Ribonuclease H-like superfamily/Ribonuclease H"/>
    <property type="match status" value="1"/>
</dbReference>
<dbReference type="HAMAP" id="MF_00034">
    <property type="entry name" value="RuvC"/>
    <property type="match status" value="1"/>
</dbReference>
<dbReference type="InterPro" id="IPR012337">
    <property type="entry name" value="RNaseH-like_sf"/>
</dbReference>
<dbReference type="InterPro" id="IPR036397">
    <property type="entry name" value="RNaseH_sf"/>
</dbReference>
<dbReference type="InterPro" id="IPR020563">
    <property type="entry name" value="X-over_junc_endoDNase_Mg_BS"/>
</dbReference>
<dbReference type="InterPro" id="IPR002176">
    <property type="entry name" value="X-over_junc_endoDNase_RuvC"/>
</dbReference>
<dbReference type="NCBIfam" id="TIGR00228">
    <property type="entry name" value="ruvC"/>
    <property type="match status" value="1"/>
</dbReference>
<dbReference type="PANTHER" id="PTHR30194">
    <property type="entry name" value="CROSSOVER JUNCTION ENDODEOXYRIBONUCLEASE RUVC"/>
    <property type="match status" value="1"/>
</dbReference>
<dbReference type="PANTHER" id="PTHR30194:SF3">
    <property type="entry name" value="CROSSOVER JUNCTION ENDODEOXYRIBONUCLEASE RUVC"/>
    <property type="match status" value="1"/>
</dbReference>
<dbReference type="Pfam" id="PF02075">
    <property type="entry name" value="RuvC"/>
    <property type="match status" value="1"/>
</dbReference>
<dbReference type="PRINTS" id="PR00696">
    <property type="entry name" value="RSOLVASERUVC"/>
</dbReference>
<dbReference type="SUPFAM" id="SSF53098">
    <property type="entry name" value="Ribonuclease H-like"/>
    <property type="match status" value="1"/>
</dbReference>
<dbReference type="PROSITE" id="PS01321">
    <property type="entry name" value="RUVC"/>
    <property type="match status" value="1"/>
</dbReference>
<name>RUVC_YERP3</name>
<feature type="chain" id="PRO_1000057270" description="Crossover junction endodeoxyribonuclease RuvC">
    <location>
        <begin position="1"/>
        <end position="173"/>
    </location>
</feature>
<feature type="active site" evidence="1">
    <location>
        <position position="8"/>
    </location>
</feature>
<feature type="active site" evidence="1">
    <location>
        <position position="67"/>
    </location>
</feature>
<feature type="active site" evidence="1">
    <location>
        <position position="139"/>
    </location>
</feature>
<feature type="binding site" evidence="1">
    <location>
        <position position="8"/>
    </location>
    <ligand>
        <name>Mg(2+)</name>
        <dbReference type="ChEBI" id="CHEBI:18420"/>
        <label>1</label>
    </ligand>
</feature>
<feature type="binding site" evidence="1">
    <location>
        <position position="67"/>
    </location>
    <ligand>
        <name>Mg(2+)</name>
        <dbReference type="ChEBI" id="CHEBI:18420"/>
        <label>2</label>
    </ligand>
</feature>
<feature type="binding site" evidence="1">
    <location>
        <position position="139"/>
    </location>
    <ligand>
        <name>Mg(2+)</name>
        <dbReference type="ChEBI" id="CHEBI:18420"/>
        <label>1</label>
    </ligand>
</feature>
<protein>
    <recommendedName>
        <fullName evidence="1">Crossover junction endodeoxyribonuclease RuvC</fullName>
        <ecNumber evidence="1">3.1.21.10</ecNumber>
    </recommendedName>
    <alternativeName>
        <fullName evidence="1">Holliday junction nuclease RuvC</fullName>
    </alternativeName>
    <alternativeName>
        <fullName evidence="1">Holliday junction resolvase RuvC</fullName>
    </alternativeName>
</protein>
<reference key="1">
    <citation type="journal article" date="2007" name="PLoS Genet.">
        <title>The complete genome sequence of Yersinia pseudotuberculosis IP31758, the causative agent of Far East scarlet-like fever.</title>
        <authorList>
            <person name="Eppinger M."/>
            <person name="Rosovitz M.J."/>
            <person name="Fricke W.F."/>
            <person name="Rasko D.A."/>
            <person name="Kokorina G."/>
            <person name="Fayolle C."/>
            <person name="Lindler L.E."/>
            <person name="Carniel E."/>
            <person name="Ravel J."/>
        </authorList>
    </citation>
    <scope>NUCLEOTIDE SEQUENCE [LARGE SCALE GENOMIC DNA]</scope>
    <source>
        <strain>IP 31758</strain>
    </source>
</reference>
<gene>
    <name evidence="1" type="primary">ruvC</name>
    <name type="ordered locus">YpsIP31758_2032</name>
</gene>
<proteinExistence type="inferred from homology"/>
<evidence type="ECO:0000255" key="1">
    <source>
        <dbReference type="HAMAP-Rule" id="MF_00034"/>
    </source>
</evidence>
<accession>A7FIC7</accession>
<keyword id="KW-0963">Cytoplasm</keyword>
<keyword id="KW-0227">DNA damage</keyword>
<keyword id="KW-0233">DNA recombination</keyword>
<keyword id="KW-0234">DNA repair</keyword>
<keyword id="KW-0238">DNA-binding</keyword>
<keyword id="KW-0255">Endonuclease</keyword>
<keyword id="KW-0378">Hydrolase</keyword>
<keyword id="KW-0460">Magnesium</keyword>
<keyword id="KW-0479">Metal-binding</keyword>
<keyword id="KW-0540">Nuclease</keyword>
<comment type="function">
    <text evidence="1">The RuvA-RuvB-RuvC complex processes Holliday junction (HJ) DNA during genetic recombination and DNA repair. Endonuclease that resolves HJ intermediates. Cleaves cruciform DNA by making single-stranded nicks across the HJ at symmetrical positions within the homologous arms, yielding a 5'-phosphate and a 3'-hydroxyl group; requires a central core of homology in the junction. The consensus cleavage sequence is 5'-(A/T)TT(C/G)-3'. Cleavage occurs on the 3'-side of the TT dinucleotide at the point of strand exchange. HJ branch migration catalyzed by RuvA-RuvB allows RuvC to scan DNA until it finds its consensus sequence, where it cleaves and resolves the cruciform DNA.</text>
</comment>
<comment type="catalytic activity">
    <reaction evidence="1">
        <text>Endonucleolytic cleavage at a junction such as a reciprocal single-stranded crossover between two homologous DNA duplexes (Holliday junction).</text>
        <dbReference type="EC" id="3.1.21.10"/>
    </reaction>
</comment>
<comment type="cofactor">
    <cofactor evidence="1">
        <name>Mg(2+)</name>
        <dbReference type="ChEBI" id="CHEBI:18420"/>
    </cofactor>
    <text evidence="1">Binds 2 Mg(2+) ion per subunit.</text>
</comment>
<comment type="subunit">
    <text evidence="1">Homodimer which binds Holliday junction (HJ) DNA. The HJ becomes 2-fold symmetrical on binding to RuvC with unstacked arms; it has a different conformation from HJ DNA in complex with RuvA. In the full resolvosome a probable DNA-RuvA(4)-RuvB(12)-RuvC(2) complex forms which resolves the HJ.</text>
</comment>
<comment type="subcellular location">
    <subcellularLocation>
        <location evidence="1">Cytoplasm</location>
    </subcellularLocation>
</comment>
<comment type="similarity">
    <text evidence="1">Belongs to the RuvC family.</text>
</comment>
<sequence>MAIVLGIDPGSRVTGYGVIRQQGRQLTYLGSGCIRTVVDDMPTRLKLIYAGVTEIITQFQPDFFAIEQVFMAKNPDSALKLGQARGAAIVAAVNLNLPVSEYAARQVKQTVVGTGAAEKSQVQHMVRSLLKLPANPQADAADALAIAITHCHLSQNTLRLGNDQMTLSRGRIR</sequence>